<keyword id="KW-0150">Chloroplast</keyword>
<keyword id="KW-0275">Fatty acid biosynthesis</keyword>
<keyword id="KW-0276">Fatty acid metabolism</keyword>
<keyword id="KW-0408">Iron</keyword>
<keyword id="KW-0444">Lipid biosynthesis</keyword>
<keyword id="KW-0443">Lipid metabolism</keyword>
<keyword id="KW-0479">Metal-binding</keyword>
<keyword id="KW-0560">Oxidoreductase</keyword>
<keyword id="KW-0934">Plastid</keyword>
<keyword id="KW-1185">Reference proteome</keyword>
<keyword id="KW-0809">Transit peptide</keyword>
<dbReference type="EC" id="1.14.19.2" evidence="3"/>
<dbReference type="EMBL" id="AC021640">
    <property type="protein sequence ID" value="AAF32469.1"/>
    <property type="status" value="ALT_SEQ"/>
    <property type="molecule type" value="Genomic_DNA"/>
</dbReference>
<dbReference type="EMBL" id="CP002686">
    <property type="protein sequence ID" value="AEE73840.1"/>
    <property type="molecule type" value="Genomic_DNA"/>
</dbReference>
<dbReference type="RefSeq" id="NP_186911.2">
    <property type="nucleotide sequence ID" value="NM_111130.3"/>
</dbReference>
<dbReference type="SMR" id="Q9M880"/>
<dbReference type="FunCoup" id="Q9M880">
    <property type="interactions" value="71"/>
</dbReference>
<dbReference type="STRING" id="3702.Q9M880"/>
<dbReference type="PaxDb" id="3702-AT3G02620.1"/>
<dbReference type="EnsemblPlants" id="AT3G02620.1">
    <property type="protein sequence ID" value="AT3G02620.1"/>
    <property type="gene ID" value="AT3G02620"/>
</dbReference>
<dbReference type="GeneID" id="820737"/>
<dbReference type="Gramene" id="AT3G02620.1">
    <property type="protein sequence ID" value="AT3G02620.1"/>
    <property type="gene ID" value="AT3G02620"/>
</dbReference>
<dbReference type="KEGG" id="ath:AT3G02620"/>
<dbReference type="Araport" id="AT3G02620"/>
<dbReference type="TAIR" id="AT3G02620">
    <property type="gene designation" value="AAD4"/>
</dbReference>
<dbReference type="eggNOG" id="ENOG502QRJK">
    <property type="taxonomic scope" value="Eukaryota"/>
</dbReference>
<dbReference type="HOGENOM" id="CLU_034505_1_0_1"/>
<dbReference type="InParanoid" id="Q9M880"/>
<dbReference type="PhylomeDB" id="Q9M880"/>
<dbReference type="BRENDA" id="1.14.19.2">
    <property type="organism ID" value="399"/>
</dbReference>
<dbReference type="UniPathway" id="UPA00199"/>
<dbReference type="PRO" id="PR:Q9M880"/>
<dbReference type="Proteomes" id="UP000006548">
    <property type="component" value="Chromosome 3"/>
</dbReference>
<dbReference type="ExpressionAtlas" id="Q9M880">
    <property type="expression patterns" value="baseline and differential"/>
</dbReference>
<dbReference type="GO" id="GO:0009507">
    <property type="term" value="C:chloroplast"/>
    <property type="evidence" value="ECO:0007669"/>
    <property type="project" value="UniProtKB-SubCell"/>
</dbReference>
<dbReference type="GO" id="GO:0046872">
    <property type="term" value="F:metal ion binding"/>
    <property type="evidence" value="ECO:0007669"/>
    <property type="project" value="UniProtKB-KW"/>
</dbReference>
<dbReference type="GO" id="GO:0045300">
    <property type="term" value="F:stearoyl-[ACP] desaturase activity"/>
    <property type="evidence" value="ECO:0007669"/>
    <property type="project" value="UniProtKB-EC"/>
</dbReference>
<dbReference type="GO" id="GO:0006633">
    <property type="term" value="P:fatty acid biosynthetic process"/>
    <property type="evidence" value="ECO:0007669"/>
    <property type="project" value="UniProtKB-KW"/>
</dbReference>
<dbReference type="CDD" id="cd01050">
    <property type="entry name" value="Acyl_ACP_Desat"/>
    <property type="match status" value="1"/>
</dbReference>
<dbReference type="FunFam" id="1.10.620.20:FF:000002">
    <property type="entry name" value="Stearoyl-[acyl-carrier-protein] 9-desaturase, chloroplastic"/>
    <property type="match status" value="1"/>
</dbReference>
<dbReference type="Gene3D" id="1.10.620.20">
    <property type="entry name" value="Ribonucleotide Reductase, subunit A"/>
    <property type="match status" value="1"/>
</dbReference>
<dbReference type="InterPro" id="IPR005067">
    <property type="entry name" value="Fatty_acid_desaturase-2"/>
</dbReference>
<dbReference type="InterPro" id="IPR009078">
    <property type="entry name" value="Ferritin-like_SF"/>
</dbReference>
<dbReference type="InterPro" id="IPR012348">
    <property type="entry name" value="RNR-like"/>
</dbReference>
<dbReference type="PANTHER" id="PTHR31155">
    <property type="entry name" value="ACYL- ACYL-CARRIER-PROTEIN DESATURASE-RELATED"/>
    <property type="match status" value="1"/>
</dbReference>
<dbReference type="PANTHER" id="PTHR31155:SF30">
    <property type="entry name" value="STEAROYL-[ACYL-CARRIER-PROTEIN] 9-DESATURASE 2, CHLOROPLASTIC-RELATED"/>
    <property type="match status" value="1"/>
</dbReference>
<dbReference type="Pfam" id="PF03405">
    <property type="entry name" value="FA_desaturase_2"/>
    <property type="match status" value="1"/>
</dbReference>
<dbReference type="PIRSF" id="PIRSF000346">
    <property type="entry name" value="Dlt9_acylACP_des"/>
    <property type="match status" value="1"/>
</dbReference>
<dbReference type="SUPFAM" id="SSF47240">
    <property type="entry name" value="Ferritin-like"/>
    <property type="match status" value="1"/>
</dbReference>
<reference key="1">
    <citation type="journal article" date="2000" name="Nature">
        <title>Sequence and analysis of chromosome 3 of the plant Arabidopsis thaliana.</title>
        <authorList>
            <person name="Salanoubat M."/>
            <person name="Lemcke K."/>
            <person name="Rieger M."/>
            <person name="Ansorge W."/>
            <person name="Unseld M."/>
            <person name="Fartmann B."/>
            <person name="Valle G."/>
            <person name="Bloecker H."/>
            <person name="Perez-Alonso M."/>
            <person name="Obermaier B."/>
            <person name="Delseny M."/>
            <person name="Boutry M."/>
            <person name="Grivell L.A."/>
            <person name="Mache R."/>
            <person name="Puigdomenech P."/>
            <person name="De Simone V."/>
            <person name="Choisne N."/>
            <person name="Artiguenave F."/>
            <person name="Robert C."/>
            <person name="Brottier P."/>
            <person name="Wincker P."/>
            <person name="Cattolico L."/>
            <person name="Weissenbach J."/>
            <person name="Saurin W."/>
            <person name="Quetier F."/>
            <person name="Schaefer M."/>
            <person name="Mueller-Auer S."/>
            <person name="Gabel C."/>
            <person name="Fuchs M."/>
            <person name="Benes V."/>
            <person name="Wurmbach E."/>
            <person name="Drzonek H."/>
            <person name="Erfle H."/>
            <person name="Jordan N."/>
            <person name="Bangert S."/>
            <person name="Wiedelmann R."/>
            <person name="Kranz H."/>
            <person name="Voss H."/>
            <person name="Holland R."/>
            <person name="Brandt P."/>
            <person name="Nyakatura G."/>
            <person name="Vezzi A."/>
            <person name="D'Angelo M."/>
            <person name="Pallavicini A."/>
            <person name="Toppo S."/>
            <person name="Simionati B."/>
            <person name="Conrad A."/>
            <person name="Hornischer K."/>
            <person name="Kauer G."/>
            <person name="Loehnert T.-H."/>
            <person name="Nordsiek G."/>
            <person name="Reichelt J."/>
            <person name="Scharfe M."/>
            <person name="Schoen O."/>
            <person name="Bargues M."/>
            <person name="Terol J."/>
            <person name="Climent J."/>
            <person name="Navarro P."/>
            <person name="Collado C."/>
            <person name="Perez-Perez A."/>
            <person name="Ottenwaelder B."/>
            <person name="Duchemin D."/>
            <person name="Cooke R."/>
            <person name="Laudie M."/>
            <person name="Berger-Llauro C."/>
            <person name="Purnelle B."/>
            <person name="Masuy D."/>
            <person name="de Haan M."/>
            <person name="Maarse A.C."/>
            <person name="Alcaraz J.-P."/>
            <person name="Cottet A."/>
            <person name="Casacuberta E."/>
            <person name="Monfort A."/>
            <person name="Argiriou A."/>
            <person name="Flores M."/>
            <person name="Liguori R."/>
            <person name="Vitale D."/>
            <person name="Mannhaupt G."/>
            <person name="Haase D."/>
            <person name="Schoof H."/>
            <person name="Rudd S."/>
            <person name="Zaccaria P."/>
            <person name="Mewes H.-W."/>
            <person name="Mayer K.F.X."/>
            <person name="Kaul S."/>
            <person name="Town C.D."/>
            <person name="Koo H.L."/>
            <person name="Tallon L.J."/>
            <person name="Jenkins J."/>
            <person name="Rooney T."/>
            <person name="Rizzo M."/>
            <person name="Walts A."/>
            <person name="Utterback T."/>
            <person name="Fujii C.Y."/>
            <person name="Shea T.P."/>
            <person name="Creasy T.H."/>
            <person name="Haas B."/>
            <person name="Maiti R."/>
            <person name="Wu D."/>
            <person name="Peterson J."/>
            <person name="Van Aken S."/>
            <person name="Pai G."/>
            <person name="Militscher J."/>
            <person name="Sellers P."/>
            <person name="Gill J.E."/>
            <person name="Feldblyum T.V."/>
            <person name="Preuss D."/>
            <person name="Lin X."/>
            <person name="Nierman W.C."/>
            <person name="Salzberg S.L."/>
            <person name="White O."/>
            <person name="Venter J.C."/>
            <person name="Fraser C.M."/>
            <person name="Kaneko T."/>
            <person name="Nakamura Y."/>
            <person name="Sato S."/>
            <person name="Kato T."/>
            <person name="Asamizu E."/>
            <person name="Sasamoto S."/>
            <person name="Kimura T."/>
            <person name="Idesawa K."/>
            <person name="Kawashima K."/>
            <person name="Kishida Y."/>
            <person name="Kiyokawa C."/>
            <person name="Kohara M."/>
            <person name="Matsumoto M."/>
            <person name="Matsuno A."/>
            <person name="Muraki A."/>
            <person name="Nakayama S."/>
            <person name="Nakazaki N."/>
            <person name="Shinpo S."/>
            <person name="Takeuchi C."/>
            <person name="Wada T."/>
            <person name="Watanabe A."/>
            <person name="Yamada M."/>
            <person name="Yasuda M."/>
            <person name="Tabata S."/>
        </authorList>
    </citation>
    <scope>NUCLEOTIDE SEQUENCE [LARGE SCALE GENOMIC DNA]</scope>
    <source>
        <strain>cv. Columbia</strain>
    </source>
</reference>
<reference key="2">
    <citation type="journal article" date="2017" name="Plant J.">
        <title>Araport11: a complete reannotation of the Arabidopsis thaliana reference genome.</title>
        <authorList>
            <person name="Cheng C.Y."/>
            <person name="Krishnakumar V."/>
            <person name="Chan A.P."/>
            <person name="Thibaud-Nissen F."/>
            <person name="Schobel S."/>
            <person name="Town C.D."/>
        </authorList>
    </citation>
    <scope>GENOME REANNOTATION</scope>
    <source>
        <strain>cv. Columbia</strain>
    </source>
</reference>
<reference key="3">
    <citation type="journal article" date="2007" name="Plant Mol. Biol.">
        <title>The Arabidopsis stearoyl-acyl carrier protein-desaturase family and the contribution of leaf isoforms to oleic acid synthesis.</title>
        <authorList>
            <person name="Kachroo A."/>
            <person name="Shanklin J."/>
            <person name="Whittle E."/>
            <person name="Lapchyk L."/>
            <person name="Hildebrand D."/>
            <person name="Kachroo P."/>
        </authorList>
    </citation>
    <scope>GENE FAMILY</scope>
    <scope>FUNCTION</scope>
    <scope>CATALYTIC ACTIVITY</scope>
    <scope>DISRUPTION PHENOTYPE</scope>
    <scope>TISSUE SPECIFICITY</scope>
</reference>
<evidence type="ECO:0000250" key="1">
    <source>
        <dbReference type="UniProtKB" id="P22337"/>
    </source>
</evidence>
<evidence type="ECO:0000255" key="2"/>
<evidence type="ECO:0000269" key="3">
    <source>
    </source>
</evidence>
<evidence type="ECO:0000305" key="4"/>
<organism>
    <name type="scientific">Arabidopsis thaliana</name>
    <name type="common">Mouse-ear cress</name>
    <dbReference type="NCBI Taxonomy" id="3702"/>
    <lineage>
        <taxon>Eukaryota</taxon>
        <taxon>Viridiplantae</taxon>
        <taxon>Streptophyta</taxon>
        <taxon>Embryophyta</taxon>
        <taxon>Tracheophyta</taxon>
        <taxon>Spermatophyta</taxon>
        <taxon>Magnoliopsida</taxon>
        <taxon>eudicotyledons</taxon>
        <taxon>Gunneridae</taxon>
        <taxon>Pentapetalae</taxon>
        <taxon>rosids</taxon>
        <taxon>malvids</taxon>
        <taxon>Brassicales</taxon>
        <taxon>Brassicaceae</taxon>
        <taxon>Camelineae</taxon>
        <taxon>Arabidopsis</taxon>
    </lineage>
</organism>
<comment type="function">
    <text evidence="3">Converts stearoyl-ACP to oleoyl-ACP by introduction of a cis double bond between carbons 9 and 10 of the acyl chain.</text>
</comment>
<comment type="catalytic activity">
    <reaction evidence="3">
        <text>octadecanoyl-[ACP] + 2 reduced [2Fe-2S]-[ferredoxin] + O2 + 2 H(+) = (9Z)-octadecenoyl-[ACP] + 2 oxidized [2Fe-2S]-[ferredoxin] + 2 H2O</text>
        <dbReference type="Rhea" id="RHEA:11776"/>
        <dbReference type="Rhea" id="RHEA-COMP:9656"/>
        <dbReference type="Rhea" id="RHEA-COMP:9924"/>
        <dbReference type="Rhea" id="RHEA-COMP:10000"/>
        <dbReference type="Rhea" id="RHEA-COMP:10001"/>
        <dbReference type="ChEBI" id="CHEBI:15377"/>
        <dbReference type="ChEBI" id="CHEBI:15378"/>
        <dbReference type="ChEBI" id="CHEBI:15379"/>
        <dbReference type="ChEBI" id="CHEBI:33737"/>
        <dbReference type="ChEBI" id="CHEBI:33738"/>
        <dbReference type="ChEBI" id="CHEBI:78495"/>
        <dbReference type="ChEBI" id="CHEBI:78783"/>
        <dbReference type="EC" id="1.14.19.2"/>
    </reaction>
</comment>
<comment type="cofactor">
    <cofactor evidence="1">
        <name>Fe(2+)</name>
        <dbReference type="ChEBI" id="CHEBI:29033"/>
    </cofactor>
    <text evidence="1">Binds 2 Fe(2+) ions per subunit.</text>
</comment>
<comment type="pathway">
    <text>Lipid metabolism; fatty acid metabolism.</text>
</comment>
<comment type="subunit">
    <text evidence="1">Homodimer.</text>
</comment>
<comment type="subcellular location">
    <subcellularLocation>
        <location evidence="4">Plastid</location>
        <location evidence="4">Chloroplast</location>
    </subcellularLocation>
</comment>
<comment type="tissue specificity">
    <text evidence="3">Preferentially expressed in roots.</text>
</comment>
<comment type="disruption phenotype">
    <text evidence="3">No visible phenotype.</text>
</comment>
<comment type="similarity">
    <text evidence="4">Belongs to the fatty acid desaturase type 2 family.</text>
</comment>
<comment type="sequence caution" evidence="4">
    <conflict type="erroneous gene model prediction">
        <sequence resource="EMBL-CDS" id="AAF32469"/>
    </conflict>
</comment>
<protein>
    <recommendedName>
        <fullName>Stearoyl-[acyl-carrier-protein] 9-desaturase 4, chloroplastic</fullName>
        <shortName>Stearoyl-ACP desaturase 4</shortName>
        <ecNumber evidence="3">1.14.19.2</ecNumber>
    </recommendedName>
    <alternativeName>
        <fullName>Acyl-[acyl-carrier-protein] desaturase 4</fullName>
    </alternativeName>
</protein>
<accession>Q9M880</accession>
<name>STAD4_ARATH</name>
<proteinExistence type="evidence at protein level"/>
<sequence length="403" mass="46156">MALLLNSTMTVAMKQNPATAVSFMQTTCLGSSFSPPRHLQVSCVATNPSKTFRPIKEVSNQVTHTITQEKLEIFKSMENWAQENLLSYLKPVETSWQPQDFLPETKDEDRFYEQVKELRDRTKEIPDDYFVVLVGDMITEEALPTYQTVMNTLDGAKDETGVSLTPWAVWLRAWTAEENRHGDLLNKYLYLSGRVDTRHVEKTIQYLIGSGMDTKYENNPYNGYIYTSFQERATFISHANTAKLATTYGDTTLAKICGTIAADEKRHEMAYTRIVEKLFEIDPDGTVQALASMMRKRITMPAQLMHDGRDDNLFDHYAAVAQRIGVYTATDYAGILEFLLRRWEVEKLGMGLSGEGRRAQDYLCTLPQRIRRLEERADDRVKRASKSKPSVSFSWIYGREVEL</sequence>
<gene>
    <name type="primary">S-ACP-DES4</name>
    <name type="synonym">AAD4</name>
    <name type="synonym">SAD4</name>
    <name type="ordered locus">At3g02620</name>
    <name type="ORF">F16B3.25</name>
</gene>
<feature type="transit peptide" description="Chloroplast" evidence="2">
    <location>
        <begin position="1"/>
        <end position="44"/>
    </location>
</feature>
<feature type="chain" id="PRO_0000401422" description="Stearoyl-[acyl-carrier-protein] 9-desaturase 4, chloroplastic">
    <location>
        <begin position="45"/>
        <end position="403"/>
    </location>
</feature>
<feature type="binding site" evidence="1">
    <location>
        <position position="140"/>
    </location>
    <ligand>
        <name>Fe cation</name>
        <dbReference type="ChEBI" id="CHEBI:24875"/>
        <label>1</label>
    </ligand>
</feature>
<feature type="binding site" evidence="1">
    <location>
        <position position="178"/>
    </location>
    <ligand>
        <name>Fe cation</name>
        <dbReference type="ChEBI" id="CHEBI:24875"/>
        <label>1</label>
    </ligand>
</feature>
<feature type="binding site" evidence="1">
    <location>
        <position position="178"/>
    </location>
    <ligand>
        <name>Fe cation</name>
        <dbReference type="ChEBI" id="CHEBI:24875"/>
        <label>2</label>
    </ligand>
</feature>
<feature type="binding site" evidence="1">
    <location>
        <position position="181"/>
    </location>
    <ligand>
        <name>Fe cation</name>
        <dbReference type="ChEBI" id="CHEBI:24875"/>
        <label>1</label>
    </ligand>
</feature>
<feature type="binding site" evidence="1">
    <location>
        <position position="231"/>
    </location>
    <ligand>
        <name>Fe cation</name>
        <dbReference type="ChEBI" id="CHEBI:24875"/>
        <label>2</label>
    </ligand>
</feature>
<feature type="binding site" evidence="1">
    <location>
        <position position="264"/>
    </location>
    <ligand>
        <name>Fe cation</name>
        <dbReference type="ChEBI" id="CHEBI:24875"/>
        <label>1</label>
    </ligand>
</feature>
<feature type="binding site" evidence="1">
    <location>
        <position position="264"/>
    </location>
    <ligand>
        <name>Fe cation</name>
        <dbReference type="ChEBI" id="CHEBI:24875"/>
        <label>2</label>
    </ligand>
</feature>
<feature type="binding site" evidence="1">
    <location>
        <position position="267"/>
    </location>
    <ligand>
        <name>Fe cation</name>
        <dbReference type="ChEBI" id="CHEBI:24875"/>
        <label>2</label>
    </ligand>
</feature>